<accession>A4W2B6</accession>
<protein>
    <recommendedName>
        <fullName evidence="1">Large ribosomal subunit protein uL1</fullName>
    </recommendedName>
    <alternativeName>
        <fullName evidence="2">50S ribosomal protein L1</fullName>
    </alternativeName>
</protein>
<comment type="function">
    <text evidence="1">Binds directly to 23S rRNA. The L1 stalk is quite mobile in the ribosome, and is involved in E site tRNA release.</text>
</comment>
<comment type="function">
    <text evidence="1">Protein L1 is also a translational repressor protein, it controls the translation of the L11 operon by binding to its mRNA.</text>
</comment>
<comment type="subunit">
    <text evidence="1">Part of the 50S ribosomal subunit.</text>
</comment>
<comment type="similarity">
    <text evidence="1">Belongs to the universal ribosomal protein uL1 family.</text>
</comment>
<reference key="1">
    <citation type="journal article" date="2007" name="PLoS ONE">
        <title>A glimpse of streptococcal toxic shock syndrome from comparative genomics of S. suis 2 Chinese isolates.</title>
        <authorList>
            <person name="Chen C."/>
            <person name="Tang J."/>
            <person name="Dong W."/>
            <person name="Wang C."/>
            <person name="Feng Y."/>
            <person name="Wang J."/>
            <person name="Zheng F."/>
            <person name="Pan X."/>
            <person name="Liu D."/>
            <person name="Li M."/>
            <person name="Song Y."/>
            <person name="Zhu X."/>
            <person name="Sun H."/>
            <person name="Feng T."/>
            <person name="Guo Z."/>
            <person name="Ju A."/>
            <person name="Ge J."/>
            <person name="Dong Y."/>
            <person name="Sun W."/>
            <person name="Jiang Y."/>
            <person name="Wang J."/>
            <person name="Yan J."/>
            <person name="Yang H."/>
            <person name="Wang X."/>
            <person name="Gao G.F."/>
            <person name="Yang R."/>
            <person name="Wang J."/>
            <person name="Yu J."/>
        </authorList>
    </citation>
    <scope>NUCLEOTIDE SEQUENCE [LARGE SCALE GENOMIC DNA]</scope>
    <source>
        <strain>98HAH33</strain>
    </source>
</reference>
<sequence>MAKKSKNLRAALEKIDSTKLYSVEEAVALAKKTNFAKFDASVEVAYNLNIDVRKADQQIRGAMVLPNGTGKTSRVLVFARGAKAEEAKAAGADFVGEDDLVAKINGGWLDFDVVIATPDMMAVVGRLGRVLGPRNLMPNPKTGTVTMDVAKAVEESKGGKITYRADKAGIVQALIGKVSFDADKLVENFKAFHDVMAKAKPATAKGTYMTSVSITTTQGVGIKVDPNSL</sequence>
<feature type="chain" id="PRO_0000308121" description="Large ribosomal subunit protein uL1">
    <location>
        <begin position="1"/>
        <end position="229"/>
    </location>
</feature>
<keyword id="KW-0678">Repressor</keyword>
<keyword id="KW-0687">Ribonucleoprotein</keyword>
<keyword id="KW-0689">Ribosomal protein</keyword>
<keyword id="KW-0694">RNA-binding</keyword>
<keyword id="KW-0699">rRNA-binding</keyword>
<keyword id="KW-0810">Translation regulation</keyword>
<keyword id="KW-0820">tRNA-binding</keyword>
<dbReference type="EMBL" id="CP000408">
    <property type="protein sequence ID" value="ABP92505.1"/>
    <property type="molecule type" value="Genomic_DNA"/>
</dbReference>
<dbReference type="SMR" id="A4W2B6"/>
<dbReference type="KEGG" id="ssv:SSU98_1347"/>
<dbReference type="HOGENOM" id="CLU_062853_0_0_9"/>
<dbReference type="GO" id="GO:0015934">
    <property type="term" value="C:large ribosomal subunit"/>
    <property type="evidence" value="ECO:0007669"/>
    <property type="project" value="InterPro"/>
</dbReference>
<dbReference type="GO" id="GO:0019843">
    <property type="term" value="F:rRNA binding"/>
    <property type="evidence" value="ECO:0007669"/>
    <property type="project" value="UniProtKB-UniRule"/>
</dbReference>
<dbReference type="GO" id="GO:0003735">
    <property type="term" value="F:structural constituent of ribosome"/>
    <property type="evidence" value="ECO:0007669"/>
    <property type="project" value="InterPro"/>
</dbReference>
<dbReference type="GO" id="GO:0000049">
    <property type="term" value="F:tRNA binding"/>
    <property type="evidence" value="ECO:0007669"/>
    <property type="project" value="UniProtKB-KW"/>
</dbReference>
<dbReference type="GO" id="GO:0006417">
    <property type="term" value="P:regulation of translation"/>
    <property type="evidence" value="ECO:0007669"/>
    <property type="project" value="UniProtKB-KW"/>
</dbReference>
<dbReference type="GO" id="GO:0006412">
    <property type="term" value="P:translation"/>
    <property type="evidence" value="ECO:0007669"/>
    <property type="project" value="UniProtKB-UniRule"/>
</dbReference>
<dbReference type="CDD" id="cd00403">
    <property type="entry name" value="Ribosomal_L1"/>
    <property type="match status" value="1"/>
</dbReference>
<dbReference type="FunFam" id="3.40.50.790:FF:000001">
    <property type="entry name" value="50S ribosomal protein L1"/>
    <property type="match status" value="1"/>
</dbReference>
<dbReference type="Gene3D" id="3.30.190.20">
    <property type="match status" value="1"/>
</dbReference>
<dbReference type="Gene3D" id="3.40.50.790">
    <property type="match status" value="1"/>
</dbReference>
<dbReference type="HAMAP" id="MF_01318_B">
    <property type="entry name" value="Ribosomal_uL1_B"/>
    <property type="match status" value="1"/>
</dbReference>
<dbReference type="InterPro" id="IPR005878">
    <property type="entry name" value="Ribosom_uL1_bac-type"/>
</dbReference>
<dbReference type="InterPro" id="IPR002143">
    <property type="entry name" value="Ribosomal_uL1"/>
</dbReference>
<dbReference type="InterPro" id="IPR023674">
    <property type="entry name" value="Ribosomal_uL1-like"/>
</dbReference>
<dbReference type="InterPro" id="IPR028364">
    <property type="entry name" value="Ribosomal_uL1/biogenesis"/>
</dbReference>
<dbReference type="InterPro" id="IPR016095">
    <property type="entry name" value="Ribosomal_uL1_3-a/b-sand"/>
</dbReference>
<dbReference type="InterPro" id="IPR023673">
    <property type="entry name" value="Ribosomal_uL1_CS"/>
</dbReference>
<dbReference type="NCBIfam" id="TIGR01169">
    <property type="entry name" value="rplA_bact"/>
    <property type="match status" value="1"/>
</dbReference>
<dbReference type="PANTHER" id="PTHR36427">
    <property type="entry name" value="54S RIBOSOMAL PROTEIN L1, MITOCHONDRIAL"/>
    <property type="match status" value="1"/>
</dbReference>
<dbReference type="PANTHER" id="PTHR36427:SF3">
    <property type="entry name" value="LARGE RIBOSOMAL SUBUNIT PROTEIN UL1M"/>
    <property type="match status" value="1"/>
</dbReference>
<dbReference type="Pfam" id="PF00687">
    <property type="entry name" value="Ribosomal_L1"/>
    <property type="match status" value="1"/>
</dbReference>
<dbReference type="PIRSF" id="PIRSF002155">
    <property type="entry name" value="Ribosomal_L1"/>
    <property type="match status" value="1"/>
</dbReference>
<dbReference type="SUPFAM" id="SSF56808">
    <property type="entry name" value="Ribosomal protein L1"/>
    <property type="match status" value="1"/>
</dbReference>
<dbReference type="PROSITE" id="PS01199">
    <property type="entry name" value="RIBOSOMAL_L1"/>
    <property type="match status" value="1"/>
</dbReference>
<evidence type="ECO:0000255" key="1">
    <source>
        <dbReference type="HAMAP-Rule" id="MF_01318"/>
    </source>
</evidence>
<evidence type="ECO:0000305" key="2"/>
<gene>
    <name evidence="1" type="primary">rplA</name>
    <name type="ordered locus">SSU98_1347</name>
</gene>
<name>RL1_STRS2</name>
<organism>
    <name type="scientific">Streptococcus suis (strain 98HAH33)</name>
    <dbReference type="NCBI Taxonomy" id="391296"/>
    <lineage>
        <taxon>Bacteria</taxon>
        <taxon>Bacillati</taxon>
        <taxon>Bacillota</taxon>
        <taxon>Bacilli</taxon>
        <taxon>Lactobacillales</taxon>
        <taxon>Streptococcaceae</taxon>
        <taxon>Streptococcus</taxon>
    </lineage>
</organism>
<proteinExistence type="inferred from homology"/>